<organism>
    <name type="scientific">Listeria monocytogenes serovar 1/2a (strain ATCC BAA-679 / EGD-e)</name>
    <dbReference type="NCBI Taxonomy" id="169963"/>
    <lineage>
        <taxon>Bacteria</taxon>
        <taxon>Bacillati</taxon>
        <taxon>Bacillota</taxon>
        <taxon>Bacilli</taxon>
        <taxon>Bacillales</taxon>
        <taxon>Listeriaceae</taxon>
        <taxon>Listeria</taxon>
    </lineage>
</organism>
<accession>Q8Y643</accession>
<keyword id="KW-1185">Reference proteome</keyword>
<evidence type="ECO:0000255" key="1">
    <source>
        <dbReference type="HAMAP-Rule" id="MF_01538"/>
    </source>
</evidence>
<protein>
    <recommendedName>
        <fullName evidence="1">UPF0346 protein lmo1857</fullName>
    </recommendedName>
</protein>
<proteinExistence type="inferred from homology"/>
<dbReference type="EMBL" id="AL591981">
    <property type="protein sequence ID" value="CAC99935.1"/>
    <property type="molecule type" value="Genomic_DNA"/>
</dbReference>
<dbReference type="PIR" id="AI1306">
    <property type="entry name" value="AI1306"/>
</dbReference>
<dbReference type="RefSeq" id="NP_465382.1">
    <property type="nucleotide sequence ID" value="NC_003210.1"/>
</dbReference>
<dbReference type="RefSeq" id="WP_003720177.1">
    <property type="nucleotide sequence ID" value="NZ_CP149495.1"/>
</dbReference>
<dbReference type="SMR" id="Q8Y643"/>
<dbReference type="STRING" id="169963.gene:17594542"/>
<dbReference type="PaxDb" id="169963-lmo1857"/>
<dbReference type="EnsemblBacteria" id="CAC99935">
    <property type="protein sequence ID" value="CAC99935"/>
    <property type="gene ID" value="CAC99935"/>
</dbReference>
<dbReference type="GeneID" id="985942"/>
<dbReference type="KEGG" id="lmo:lmo1857"/>
<dbReference type="PATRIC" id="fig|169963.11.peg.1902"/>
<dbReference type="eggNOG" id="COG4479">
    <property type="taxonomic scope" value="Bacteria"/>
</dbReference>
<dbReference type="HOGENOM" id="CLU_177534_1_0_9"/>
<dbReference type="OrthoDB" id="2242851at2"/>
<dbReference type="PhylomeDB" id="Q8Y643"/>
<dbReference type="BioCyc" id="LMON169963:LMO1857-MONOMER"/>
<dbReference type="Proteomes" id="UP000000817">
    <property type="component" value="Chromosome"/>
</dbReference>
<dbReference type="Gene3D" id="1.10.150.260">
    <property type="entry name" value="YozE SAM-like"/>
    <property type="match status" value="1"/>
</dbReference>
<dbReference type="HAMAP" id="MF_01538">
    <property type="entry name" value="UPF0346"/>
    <property type="match status" value="1"/>
</dbReference>
<dbReference type="InterPro" id="IPR010673">
    <property type="entry name" value="UPF0346"/>
</dbReference>
<dbReference type="InterPro" id="IPR023089">
    <property type="entry name" value="YozE_SAM-like"/>
</dbReference>
<dbReference type="InterPro" id="IPR036806">
    <property type="entry name" value="YozE_SAM-like_sf"/>
</dbReference>
<dbReference type="NCBIfam" id="NF010193">
    <property type="entry name" value="PRK13672.1"/>
    <property type="match status" value="1"/>
</dbReference>
<dbReference type="Pfam" id="PF06855">
    <property type="entry name" value="YozE_SAM_like"/>
    <property type="match status" value="1"/>
</dbReference>
<dbReference type="PIRSF" id="PIRSF037262">
    <property type="entry name" value="UCP037262"/>
    <property type="match status" value="1"/>
</dbReference>
<dbReference type="SUPFAM" id="SSF140652">
    <property type="entry name" value="YozE-like"/>
    <property type="match status" value="1"/>
</dbReference>
<feature type="chain" id="PRO_0000164279" description="UPF0346 protein lmo1857">
    <location>
        <begin position="1"/>
        <end position="77"/>
    </location>
</feature>
<name>Y1857_LISMO</name>
<reference key="1">
    <citation type="journal article" date="2001" name="Science">
        <title>Comparative genomics of Listeria species.</title>
        <authorList>
            <person name="Glaser P."/>
            <person name="Frangeul L."/>
            <person name="Buchrieser C."/>
            <person name="Rusniok C."/>
            <person name="Amend A."/>
            <person name="Baquero F."/>
            <person name="Berche P."/>
            <person name="Bloecker H."/>
            <person name="Brandt P."/>
            <person name="Chakraborty T."/>
            <person name="Charbit A."/>
            <person name="Chetouani F."/>
            <person name="Couve E."/>
            <person name="de Daruvar A."/>
            <person name="Dehoux P."/>
            <person name="Domann E."/>
            <person name="Dominguez-Bernal G."/>
            <person name="Duchaud E."/>
            <person name="Durant L."/>
            <person name="Dussurget O."/>
            <person name="Entian K.-D."/>
            <person name="Fsihi H."/>
            <person name="Garcia-del Portillo F."/>
            <person name="Garrido P."/>
            <person name="Gautier L."/>
            <person name="Goebel W."/>
            <person name="Gomez-Lopez N."/>
            <person name="Hain T."/>
            <person name="Hauf J."/>
            <person name="Jackson D."/>
            <person name="Jones L.-M."/>
            <person name="Kaerst U."/>
            <person name="Kreft J."/>
            <person name="Kuhn M."/>
            <person name="Kunst F."/>
            <person name="Kurapkat G."/>
            <person name="Madueno E."/>
            <person name="Maitournam A."/>
            <person name="Mata Vicente J."/>
            <person name="Ng E."/>
            <person name="Nedjari H."/>
            <person name="Nordsiek G."/>
            <person name="Novella S."/>
            <person name="de Pablos B."/>
            <person name="Perez-Diaz J.-C."/>
            <person name="Purcell R."/>
            <person name="Remmel B."/>
            <person name="Rose M."/>
            <person name="Schlueter T."/>
            <person name="Simoes N."/>
            <person name="Tierrez A."/>
            <person name="Vazquez-Boland J.-A."/>
            <person name="Voss H."/>
            <person name="Wehland J."/>
            <person name="Cossart P."/>
        </authorList>
    </citation>
    <scope>NUCLEOTIDE SEQUENCE [LARGE SCALE GENOMIC DNA]</scope>
    <source>
        <strain>ATCC BAA-679 / EGD-e</strain>
    </source>
</reference>
<sequence length="77" mass="9403">MGRSFYHFLMTYRDPKLTDQKTEFANNAYRDHSFPKQTRNYHILCDYLEFNAPYLPGMSIFDELWDAYLLDEEKNKH</sequence>
<gene>
    <name type="ordered locus">lmo1857</name>
</gene>
<comment type="similarity">
    <text evidence="1">Belongs to the UPF0346 family.</text>
</comment>